<accession>Q0TBP9</accession>
<protein>
    <recommendedName>
        <fullName evidence="1">Glyoxylate/hydroxypyruvate reductase B</fullName>
        <ecNumber evidence="1">1.1.1.79</ecNumber>
        <ecNumber evidence="1">1.1.1.81</ecNumber>
    </recommendedName>
</protein>
<evidence type="ECO:0000255" key="1">
    <source>
        <dbReference type="HAMAP-Rule" id="MF_01667"/>
    </source>
</evidence>
<feature type="chain" id="PRO_0000348390" description="Glyoxylate/hydroxypyruvate reductase B">
    <location>
        <begin position="1"/>
        <end position="324"/>
    </location>
</feature>
<feature type="active site" evidence="1">
    <location>
        <position position="237"/>
    </location>
</feature>
<feature type="active site" evidence="1">
    <location>
        <position position="266"/>
    </location>
</feature>
<feature type="active site" description="Proton donor" evidence="1">
    <location>
        <position position="285"/>
    </location>
</feature>
<proteinExistence type="inferred from homology"/>
<reference key="1">
    <citation type="journal article" date="2006" name="Mol. Microbiol.">
        <title>Role of pathogenicity island-associated integrases in the genome plasticity of uropathogenic Escherichia coli strain 536.</title>
        <authorList>
            <person name="Hochhut B."/>
            <person name="Wilde C."/>
            <person name="Balling G."/>
            <person name="Middendorf B."/>
            <person name="Dobrindt U."/>
            <person name="Brzuszkiewicz E."/>
            <person name="Gottschalk G."/>
            <person name="Carniel E."/>
            <person name="Hacker J."/>
        </authorList>
    </citation>
    <scope>NUCLEOTIDE SEQUENCE [LARGE SCALE GENOMIC DNA]</scope>
    <source>
        <strain>536 / UPEC</strain>
    </source>
</reference>
<dbReference type="EC" id="1.1.1.79" evidence="1"/>
<dbReference type="EC" id="1.1.1.81" evidence="1"/>
<dbReference type="EMBL" id="CP000247">
    <property type="protein sequence ID" value="ABG71630.1"/>
    <property type="molecule type" value="Genomic_DNA"/>
</dbReference>
<dbReference type="RefSeq" id="WP_000805031.1">
    <property type="nucleotide sequence ID" value="NC_008253.1"/>
</dbReference>
<dbReference type="SMR" id="Q0TBP9"/>
<dbReference type="KEGG" id="ecp:ECP_3656"/>
<dbReference type="HOGENOM" id="CLU_019796_1_2_6"/>
<dbReference type="Proteomes" id="UP000009182">
    <property type="component" value="Chromosome"/>
</dbReference>
<dbReference type="GO" id="GO:0005829">
    <property type="term" value="C:cytosol"/>
    <property type="evidence" value="ECO:0007669"/>
    <property type="project" value="UniProtKB-ARBA"/>
</dbReference>
<dbReference type="GO" id="GO:0005886">
    <property type="term" value="C:plasma membrane"/>
    <property type="evidence" value="ECO:0007669"/>
    <property type="project" value="UniProtKB-UniRule"/>
</dbReference>
<dbReference type="GO" id="GO:0030267">
    <property type="term" value="F:glyoxylate reductase (NADPH) activity"/>
    <property type="evidence" value="ECO:0007669"/>
    <property type="project" value="UniProtKB-UniRule"/>
</dbReference>
<dbReference type="GO" id="GO:0008465">
    <property type="term" value="F:hydroxypyruvate reductase (NADH) activity"/>
    <property type="evidence" value="ECO:0007669"/>
    <property type="project" value="RHEA"/>
</dbReference>
<dbReference type="GO" id="GO:0120509">
    <property type="term" value="F:hydroxypyruvate reductase (NADPH) activity"/>
    <property type="evidence" value="ECO:0007669"/>
    <property type="project" value="RHEA"/>
</dbReference>
<dbReference type="GO" id="GO:0051287">
    <property type="term" value="F:NAD binding"/>
    <property type="evidence" value="ECO:0007669"/>
    <property type="project" value="InterPro"/>
</dbReference>
<dbReference type="CDD" id="cd05301">
    <property type="entry name" value="GDH"/>
    <property type="match status" value="1"/>
</dbReference>
<dbReference type="FunFam" id="3.40.50.720:FF:000026">
    <property type="entry name" value="Glyoxylate/hydroxypyruvate reductase B"/>
    <property type="match status" value="1"/>
</dbReference>
<dbReference type="Gene3D" id="3.40.50.720">
    <property type="entry name" value="NAD(P)-binding Rossmann-like Domain"/>
    <property type="match status" value="2"/>
</dbReference>
<dbReference type="HAMAP" id="MF_01667">
    <property type="entry name" value="2_Hacid_dh_C_GhrB"/>
    <property type="match status" value="1"/>
</dbReference>
<dbReference type="InterPro" id="IPR050223">
    <property type="entry name" value="D-isomer_2-hydroxyacid_DH"/>
</dbReference>
<dbReference type="InterPro" id="IPR006139">
    <property type="entry name" value="D-isomer_2_OHA_DH_cat_dom"/>
</dbReference>
<dbReference type="InterPro" id="IPR029753">
    <property type="entry name" value="D-isomer_DH_CS"/>
</dbReference>
<dbReference type="InterPro" id="IPR006140">
    <property type="entry name" value="D-isomer_DH_NAD-bd"/>
</dbReference>
<dbReference type="InterPro" id="IPR023756">
    <property type="entry name" value="Glyo/OHPyrv_Rdtase_B"/>
</dbReference>
<dbReference type="InterPro" id="IPR036291">
    <property type="entry name" value="NAD(P)-bd_dom_sf"/>
</dbReference>
<dbReference type="NCBIfam" id="NF011938">
    <property type="entry name" value="PRK15409.1"/>
    <property type="match status" value="1"/>
</dbReference>
<dbReference type="PANTHER" id="PTHR10996">
    <property type="entry name" value="2-HYDROXYACID DEHYDROGENASE-RELATED"/>
    <property type="match status" value="1"/>
</dbReference>
<dbReference type="PANTHER" id="PTHR10996:SF283">
    <property type="entry name" value="GLYOXYLATE_HYDROXYPYRUVATE REDUCTASE B"/>
    <property type="match status" value="1"/>
</dbReference>
<dbReference type="Pfam" id="PF00389">
    <property type="entry name" value="2-Hacid_dh"/>
    <property type="match status" value="1"/>
</dbReference>
<dbReference type="Pfam" id="PF02826">
    <property type="entry name" value="2-Hacid_dh_C"/>
    <property type="match status" value="1"/>
</dbReference>
<dbReference type="SUPFAM" id="SSF52283">
    <property type="entry name" value="Formate/glycerate dehydrogenase catalytic domain-like"/>
    <property type="match status" value="1"/>
</dbReference>
<dbReference type="SUPFAM" id="SSF51735">
    <property type="entry name" value="NAD(P)-binding Rossmann-fold domains"/>
    <property type="match status" value="1"/>
</dbReference>
<dbReference type="PROSITE" id="PS00670">
    <property type="entry name" value="D_2_HYDROXYACID_DH_2"/>
    <property type="match status" value="1"/>
</dbReference>
<dbReference type="PROSITE" id="PS00671">
    <property type="entry name" value="D_2_HYDROXYACID_DH_3"/>
    <property type="match status" value="1"/>
</dbReference>
<gene>
    <name evidence="1" type="primary">ghrB</name>
    <name type="ordered locus">ECP_3656</name>
</gene>
<comment type="function">
    <text evidence="1">Catalyzes the NADPH-dependent reduction of glyoxylate and hydroxypyruvate into glycolate and glycerate, respectively.</text>
</comment>
<comment type="catalytic activity">
    <reaction evidence="1">
        <text>glycolate + NADP(+) = glyoxylate + NADPH + H(+)</text>
        <dbReference type="Rhea" id="RHEA:10992"/>
        <dbReference type="ChEBI" id="CHEBI:15378"/>
        <dbReference type="ChEBI" id="CHEBI:29805"/>
        <dbReference type="ChEBI" id="CHEBI:36655"/>
        <dbReference type="ChEBI" id="CHEBI:57783"/>
        <dbReference type="ChEBI" id="CHEBI:58349"/>
        <dbReference type="EC" id="1.1.1.79"/>
    </reaction>
</comment>
<comment type="catalytic activity">
    <reaction evidence="1">
        <text>(R)-glycerate + NAD(+) = 3-hydroxypyruvate + NADH + H(+)</text>
        <dbReference type="Rhea" id="RHEA:17905"/>
        <dbReference type="ChEBI" id="CHEBI:15378"/>
        <dbReference type="ChEBI" id="CHEBI:16659"/>
        <dbReference type="ChEBI" id="CHEBI:17180"/>
        <dbReference type="ChEBI" id="CHEBI:57540"/>
        <dbReference type="ChEBI" id="CHEBI:57945"/>
        <dbReference type="EC" id="1.1.1.81"/>
    </reaction>
</comment>
<comment type="catalytic activity">
    <reaction evidence="1">
        <text>(R)-glycerate + NADP(+) = 3-hydroxypyruvate + NADPH + H(+)</text>
        <dbReference type="Rhea" id="RHEA:18657"/>
        <dbReference type="ChEBI" id="CHEBI:15378"/>
        <dbReference type="ChEBI" id="CHEBI:16659"/>
        <dbReference type="ChEBI" id="CHEBI:17180"/>
        <dbReference type="ChEBI" id="CHEBI:57783"/>
        <dbReference type="ChEBI" id="CHEBI:58349"/>
        <dbReference type="EC" id="1.1.1.81"/>
    </reaction>
</comment>
<comment type="subunit">
    <text evidence="1">Homodimer.</text>
</comment>
<comment type="subcellular location">
    <subcellularLocation>
        <location evidence="1">Cytoplasm</location>
    </subcellularLocation>
</comment>
<comment type="similarity">
    <text evidence="1">Belongs to the D-isomer specific 2-hydroxyacid dehydrogenase family. GhrB subfamily.</text>
</comment>
<sequence length="324" mass="35408">MKPSVILYKALPDDLLQRLQEHFTVHQVANLSPQTVEQNAAIFAEAEGLLGSNENVDAALLEKMPKLRATSTISVGYDNFDVDALTARKILLMHTPTVLTETVADTLMALVLSTARRVVEVAERVKAGEWTASIGPDWYGTDVHHKTLGIVGMGRIGMALAQRAHFGFNMPILYNARRHHKEAEERFNARYCDLDTLLQESDFVCLILPLTDETYHLFGAEQFGKMKSSAIFINAGRGPVVDENALIAALQKGEIHAAGLDVFEQEPLSVDSPLLSMANVVAVPHIGSATHETRYGMAACAVDNLIDALQGKVEKNCVNPHVAD</sequence>
<name>GHRB_ECOL5</name>
<organism>
    <name type="scientific">Escherichia coli O6:K15:H31 (strain 536 / UPEC)</name>
    <dbReference type="NCBI Taxonomy" id="362663"/>
    <lineage>
        <taxon>Bacteria</taxon>
        <taxon>Pseudomonadati</taxon>
        <taxon>Pseudomonadota</taxon>
        <taxon>Gammaproteobacteria</taxon>
        <taxon>Enterobacterales</taxon>
        <taxon>Enterobacteriaceae</taxon>
        <taxon>Escherichia</taxon>
    </lineage>
</organism>
<keyword id="KW-0963">Cytoplasm</keyword>
<keyword id="KW-0520">NAD</keyword>
<keyword id="KW-0521">NADP</keyword>
<keyword id="KW-0560">Oxidoreductase</keyword>